<organism>
    <name type="scientific">Buchnera aphidicola subsp. Baizongia pistaciae (strain Bp)</name>
    <dbReference type="NCBI Taxonomy" id="224915"/>
    <lineage>
        <taxon>Bacteria</taxon>
        <taxon>Pseudomonadati</taxon>
        <taxon>Pseudomonadota</taxon>
        <taxon>Gammaproteobacteria</taxon>
        <taxon>Enterobacterales</taxon>
        <taxon>Erwiniaceae</taxon>
        <taxon>Buchnera</taxon>
    </lineage>
</organism>
<accession>Q89A88</accession>
<reference key="1">
    <citation type="journal article" date="2003" name="Proc. Natl. Acad. Sci. U.S.A.">
        <title>Reductive genome evolution in Buchnera aphidicola.</title>
        <authorList>
            <person name="van Ham R.C.H.J."/>
            <person name="Kamerbeek J."/>
            <person name="Palacios C."/>
            <person name="Rausell C."/>
            <person name="Abascal F."/>
            <person name="Bastolla U."/>
            <person name="Fernandez J.M."/>
            <person name="Jimenez L."/>
            <person name="Postigo M."/>
            <person name="Silva F.J."/>
            <person name="Tamames J."/>
            <person name="Viguera E."/>
            <person name="Latorre A."/>
            <person name="Valencia A."/>
            <person name="Moran F."/>
            <person name="Moya A."/>
        </authorList>
    </citation>
    <scope>NUCLEOTIDE SEQUENCE [LARGE SCALE GENOMIC DNA]</scope>
    <source>
        <strain>Bp</strain>
    </source>
</reference>
<evidence type="ECO:0000255" key="1">
    <source>
        <dbReference type="HAMAP-Rule" id="MF_01368"/>
    </source>
</evidence>
<evidence type="ECO:0000305" key="2"/>
<gene>
    <name evidence="1" type="primary">rplQ</name>
    <name type="ordered locus">bbp_441</name>
</gene>
<dbReference type="EMBL" id="AE016826">
    <property type="protein sequence ID" value="AAO27147.1"/>
    <property type="molecule type" value="Genomic_DNA"/>
</dbReference>
<dbReference type="RefSeq" id="WP_011091548.1">
    <property type="nucleotide sequence ID" value="NC_004545.1"/>
</dbReference>
<dbReference type="SMR" id="Q89A88"/>
<dbReference type="STRING" id="224915.bbp_441"/>
<dbReference type="KEGG" id="bab:bbp_441"/>
<dbReference type="eggNOG" id="COG0203">
    <property type="taxonomic scope" value="Bacteria"/>
</dbReference>
<dbReference type="HOGENOM" id="CLU_074407_2_0_6"/>
<dbReference type="OrthoDB" id="9809073at2"/>
<dbReference type="Proteomes" id="UP000000601">
    <property type="component" value="Chromosome"/>
</dbReference>
<dbReference type="GO" id="GO:0022625">
    <property type="term" value="C:cytosolic large ribosomal subunit"/>
    <property type="evidence" value="ECO:0007669"/>
    <property type="project" value="TreeGrafter"/>
</dbReference>
<dbReference type="GO" id="GO:0003735">
    <property type="term" value="F:structural constituent of ribosome"/>
    <property type="evidence" value="ECO:0007669"/>
    <property type="project" value="InterPro"/>
</dbReference>
<dbReference type="GO" id="GO:0006412">
    <property type="term" value="P:translation"/>
    <property type="evidence" value="ECO:0007669"/>
    <property type="project" value="UniProtKB-UniRule"/>
</dbReference>
<dbReference type="FunFam" id="3.90.1030.10:FF:000001">
    <property type="entry name" value="50S ribosomal protein L17"/>
    <property type="match status" value="1"/>
</dbReference>
<dbReference type="Gene3D" id="3.90.1030.10">
    <property type="entry name" value="Ribosomal protein L17"/>
    <property type="match status" value="1"/>
</dbReference>
<dbReference type="HAMAP" id="MF_01368">
    <property type="entry name" value="Ribosomal_bL17"/>
    <property type="match status" value="1"/>
</dbReference>
<dbReference type="InterPro" id="IPR000456">
    <property type="entry name" value="Ribosomal_bL17"/>
</dbReference>
<dbReference type="InterPro" id="IPR047859">
    <property type="entry name" value="Ribosomal_bL17_CS"/>
</dbReference>
<dbReference type="InterPro" id="IPR036373">
    <property type="entry name" value="Ribosomal_bL17_sf"/>
</dbReference>
<dbReference type="NCBIfam" id="TIGR00059">
    <property type="entry name" value="L17"/>
    <property type="match status" value="1"/>
</dbReference>
<dbReference type="PANTHER" id="PTHR14413:SF16">
    <property type="entry name" value="LARGE RIBOSOMAL SUBUNIT PROTEIN BL17M"/>
    <property type="match status" value="1"/>
</dbReference>
<dbReference type="PANTHER" id="PTHR14413">
    <property type="entry name" value="RIBOSOMAL PROTEIN L17"/>
    <property type="match status" value="1"/>
</dbReference>
<dbReference type="Pfam" id="PF01196">
    <property type="entry name" value="Ribosomal_L17"/>
    <property type="match status" value="1"/>
</dbReference>
<dbReference type="SUPFAM" id="SSF64263">
    <property type="entry name" value="Prokaryotic ribosomal protein L17"/>
    <property type="match status" value="1"/>
</dbReference>
<dbReference type="PROSITE" id="PS01167">
    <property type="entry name" value="RIBOSOMAL_L17"/>
    <property type="match status" value="1"/>
</dbReference>
<keyword id="KW-1185">Reference proteome</keyword>
<keyword id="KW-0687">Ribonucleoprotein</keyword>
<keyword id="KW-0689">Ribosomal protein</keyword>
<comment type="subunit">
    <text evidence="1">Part of the 50S ribosomal subunit. Contacts protein L32.</text>
</comment>
<comment type="similarity">
    <text evidence="1">Belongs to the bacterial ribosomal protein bL17 family.</text>
</comment>
<name>RL17_BUCBP</name>
<proteinExistence type="inferred from homology"/>
<feature type="chain" id="PRO_0000175519" description="Large ribosomal subunit protein bL17">
    <location>
        <begin position="1"/>
        <end position="129"/>
    </location>
</feature>
<sequence length="129" mass="15135">MRHRKIGRRFNKSATHVKAMLKNMVCSLFRYEMIKTTVSKAKELRRVAEPLITCAKIDSVANRRLVFSRIRDNKIVFKLFRDLGPHFLGQFGGYTRILRCGFRSGDQAPMAYIQLINRVKNKKELVYKK</sequence>
<protein>
    <recommendedName>
        <fullName evidence="1">Large ribosomal subunit protein bL17</fullName>
    </recommendedName>
    <alternativeName>
        <fullName evidence="2">50S ribosomal protein L17</fullName>
    </alternativeName>
</protein>